<dbReference type="EMBL" id="AP009256">
    <property type="protein sequence ID" value="BAF39005.1"/>
    <property type="molecule type" value="Genomic_DNA"/>
</dbReference>
<dbReference type="RefSeq" id="WP_003807696.1">
    <property type="nucleotide sequence ID" value="NZ_CAXVNC010000001.1"/>
</dbReference>
<dbReference type="SMR" id="A0ZZX2"/>
<dbReference type="STRING" id="367928.BAD_0224"/>
<dbReference type="PaxDb" id="1680-BADO_0231"/>
<dbReference type="GeneID" id="4556503"/>
<dbReference type="KEGG" id="bad:BAD_0224"/>
<dbReference type="HOGENOM" id="CLU_129084_1_1_11"/>
<dbReference type="Proteomes" id="UP000008702">
    <property type="component" value="Chromosome"/>
</dbReference>
<dbReference type="GO" id="GO:0015934">
    <property type="term" value="C:large ribosomal subunit"/>
    <property type="evidence" value="ECO:0007669"/>
    <property type="project" value="InterPro"/>
</dbReference>
<dbReference type="GO" id="GO:0003735">
    <property type="term" value="F:structural constituent of ribosome"/>
    <property type="evidence" value="ECO:0007669"/>
    <property type="project" value="InterPro"/>
</dbReference>
<dbReference type="GO" id="GO:0006412">
    <property type="term" value="P:translation"/>
    <property type="evidence" value="ECO:0007669"/>
    <property type="project" value="UniProtKB-UniRule"/>
</dbReference>
<dbReference type="HAMAP" id="MF_00340">
    <property type="entry name" value="Ribosomal_bL32"/>
    <property type="match status" value="1"/>
</dbReference>
<dbReference type="InterPro" id="IPR002677">
    <property type="entry name" value="Ribosomal_bL32"/>
</dbReference>
<dbReference type="InterPro" id="IPR044957">
    <property type="entry name" value="Ribosomal_bL32_bact"/>
</dbReference>
<dbReference type="InterPro" id="IPR011332">
    <property type="entry name" value="Ribosomal_zn-bd"/>
</dbReference>
<dbReference type="NCBIfam" id="TIGR01031">
    <property type="entry name" value="rpmF_bact"/>
    <property type="match status" value="1"/>
</dbReference>
<dbReference type="PANTHER" id="PTHR35534">
    <property type="entry name" value="50S RIBOSOMAL PROTEIN L32"/>
    <property type="match status" value="1"/>
</dbReference>
<dbReference type="PANTHER" id="PTHR35534:SF1">
    <property type="entry name" value="LARGE RIBOSOMAL SUBUNIT PROTEIN BL32"/>
    <property type="match status" value="1"/>
</dbReference>
<dbReference type="Pfam" id="PF01783">
    <property type="entry name" value="Ribosomal_L32p"/>
    <property type="match status" value="1"/>
</dbReference>
<dbReference type="SUPFAM" id="SSF57829">
    <property type="entry name" value="Zn-binding ribosomal proteins"/>
    <property type="match status" value="1"/>
</dbReference>
<gene>
    <name evidence="1" type="primary">rpmF</name>
    <name type="ordered locus">BAD_0224</name>
</gene>
<accession>A0ZZX2</accession>
<name>RL32_BIFAA</name>
<keyword id="KW-1185">Reference proteome</keyword>
<keyword id="KW-0687">Ribonucleoprotein</keyword>
<keyword id="KW-0689">Ribosomal protein</keyword>
<protein>
    <recommendedName>
        <fullName evidence="1">Large ribosomal subunit protein bL32</fullName>
    </recommendedName>
    <alternativeName>
        <fullName evidence="3">50S ribosomal protein L32</fullName>
    </alternativeName>
</protein>
<reference key="1">
    <citation type="submission" date="2006-12" db="EMBL/GenBank/DDBJ databases">
        <title>Bifidobacterium adolescentis complete genome sequence.</title>
        <authorList>
            <person name="Suzuki T."/>
            <person name="Tsuda Y."/>
            <person name="Kanou N."/>
            <person name="Inoue T."/>
            <person name="Kumazaki K."/>
            <person name="Nagano S."/>
            <person name="Hirai S."/>
            <person name="Tanaka K."/>
            <person name="Watanabe K."/>
        </authorList>
    </citation>
    <scope>NUCLEOTIDE SEQUENCE [LARGE SCALE GENOMIC DNA]</scope>
    <source>
        <strain>ATCC 15703 / DSM 20083 / NCTC 11814 / E194a</strain>
    </source>
</reference>
<organism>
    <name type="scientific">Bifidobacterium adolescentis (strain ATCC 15703 / DSM 20083 / NCTC 11814 / E194a)</name>
    <dbReference type="NCBI Taxonomy" id="367928"/>
    <lineage>
        <taxon>Bacteria</taxon>
        <taxon>Bacillati</taxon>
        <taxon>Actinomycetota</taxon>
        <taxon>Actinomycetes</taxon>
        <taxon>Bifidobacteriales</taxon>
        <taxon>Bifidobacteriaceae</taxon>
        <taxon>Bifidobacterium</taxon>
    </lineage>
</organism>
<comment type="similarity">
    <text evidence="1">Belongs to the bacterial ribosomal protein bL32 family.</text>
</comment>
<sequence length="64" mass="7073">MALPKYKTSRANTHSRRANWKAKAAQTVTCPNCGAPTLPHMACPSCGSFRGRVYREAVRSIHTK</sequence>
<proteinExistence type="inferred from homology"/>
<evidence type="ECO:0000255" key="1">
    <source>
        <dbReference type="HAMAP-Rule" id="MF_00340"/>
    </source>
</evidence>
<evidence type="ECO:0000256" key="2">
    <source>
        <dbReference type="SAM" id="MobiDB-lite"/>
    </source>
</evidence>
<evidence type="ECO:0000305" key="3"/>
<feature type="chain" id="PRO_0000296428" description="Large ribosomal subunit protein bL32">
    <location>
        <begin position="1"/>
        <end position="64"/>
    </location>
</feature>
<feature type="region of interest" description="Disordered" evidence="2">
    <location>
        <begin position="1"/>
        <end position="20"/>
    </location>
</feature>